<protein>
    <recommendedName>
        <fullName evidence="1">Enolase-phosphatase E1</fullName>
        <ecNumber evidence="1">3.1.3.77</ecNumber>
    </recommendedName>
    <alternativeName>
        <fullName evidence="1">2,3-diketo-5-methylthio-1-phosphopentane phosphatase</fullName>
    </alternativeName>
</protein>
<evidence type="ECO:0000255" key="1">
    <source>
        <dbReference type="HAMAP-Rule" id="MF_01681"/>
    </source>
</evidence>
<proteinExistence type="inferred from homology"/>
<gene>
    <name evidence="1" type="primary">mtnC</name>
    <name type="ordered locus">Acry_0019</name>
</gene>
<organism>
    <name type="scientific">Acidiphilium cryptum (strain JF-5)</name>
    <dbReference type="NCBI Taxonomy" id="349163"/>
    <lineage>
        <taxon>Bacteria</taxon>
        <taxon>Pseudomonadati</taxon>
        <taxon>Pseudomonadota</taxon>
        <taxon>Alphaproteobacteria</taxon>
        <taxon>Acetobacterales</taxon>
        <taxon>Acidocellaceae</taxon>
        <taxon>Acidiphilium</taxon>
    </lineage>
</organism>
<comment type="function">
    <text evidence="1">Bifunctional enzyme that catalyzes the enolization of 2,3-diketo-5-methylthiopentyl-1-phosphate (DK-MTP-1-P) into the intermediate 2-hydroxy-3-keto-5-methylthiopentenyl-1-phosphate (HK-MTPenyl-1-P), which is then dephosphorylated to form the acireductone 1,2-dihydroxy-3-keto-5-methylthiopentene (DHK-MTPene).</text>
</comment>
<comment type="catalytic activity">
    <reaction evidence="1">
        <text>5-methylsulfanyl-2,3-dioxopentyl phosphate + H2O = 1,2-dihydroxy-5-(methylsulfanyl)pent-1-en-3-one + phosphate</text>
        <dbReference type="Rhea" id="RHEA:21700"/>
        <dbReference type="ChEBI" id="CHEBI:15377"/>
        <dbReference type="ChEBI" id="CHEBI:43474"/>
        <dbReference type="ChEBI" id="CHEBI:49252"/>
        <dbReference type="ChEBI" id="CHEBI:58828"/>
        <dbReference type="EC" id="3.1.3.77"/>
    </reaction>
</comment>
<comment type="cofactor">
    <cofactor evidence="1">
        <name>Mg(2+)</name>
        <dbReference type="ChEBI" id="CHEBI:18420"/>
    </cofactor>
    <text evidence="1">Binds 1 Mg(2+) ion per subunit.</text>
</comment>
<comment type="pathway">
    <text evidence="1">Amino-acid biosynthesis; L-methionine biosynthesis via salvage pathway; L-methionine from S-methyl-5-thio-alpha-D-ribose 1-phosphate: step 3/6.</text>
</comment>
<comment type="pathway">
    <text evidence="1">Amino-acid biosynthesis; L-methionine biosynthesis via salvage pathway; L-methionine from S-methyl-5-thio-alpha-D-ribose 1-phosphate: step 4/6.</text>
</comment>
<comment type="subunit">
    <text evidence="1">Monomer.</text>
</comment>
<comment type="similarity">
    <text evidence="1">Belongs to the HAD-like hydrolase superfamily. MasA/MtnC family.</text>
</comment>
<feature type="chain" id="PRO_0000357356" description="Enolase-phosphatase E1">
    <location>
        <begin position="1"/>
        <end position="232"/>
    </location>
</feature>
<keyword id="KW-0028">Amino-acid biosynthesis</keyword>
<keyword id="KW-0378">Hydrolase</keyword>
<keyword id="KW-0460">Magnesium</keyword>
<keyword id="KW-0479">Metal-binding</keyword>
<keyword id="KW-0486">Methionine biosynthesis</keyword>
<keyword id="KW-1185">Reference proteome</keyword>
<accession>A5FUG6</accession>
<dbReference type="EC" id="3.1.3.77" evidence="1"/>
<dbReference type="EMBL" id="CP000697">
    <property type="protein sequence ID" value="ABQ29248.1"/>
    <property type="molecule type" value="Genomic_DNA"/>
</dbReference>
<dbReference type="RefSeq" id="WP_007421946.1">
    <property type="nucleotide sequence ID" value="NC_009484.1"/>
</dbReference>
<dbReference type="SMR" id="A5FUG6"/>
<dbReference type="STRING" id="349163.Acry_0019"/>
<dbReference type="KEGG" id="acr:Acry_0019"/>
<dbReference type="eggNOG" id="COG4229">
    <property type="taxonomic scope" value="Bacteria"/>
</dbReference>
<dbReference type="HOGENOM" id="CLU_023273_0_0_5"/>
<dbReference type="UniPathway" id="UPA00904">
    <property type="reaction ID" value="UER00876"/>
</dbReference>
<dbReference type="UniPathway" id="UPA00904">
    <property type="reaction ID" value="UER00877"/>
</dbReference>
<dbReference type="Proteomes" id="UP000000245">
    <property type="component" value="Chromosome"/>
</dbReference>
<dbReference type="GO" id="GO:0043715">
    <property type="term" value="F:2,3-diketo-5-methylthiopentyl-1-phosphate enolase activity"/>
    <property type="evidence" value="ECO:0007669"/>
    <property type="project" value="UniProtKB-UniRule"/>
</dbReference>
<dbReference type="GO" id="GO:0043716">
    <property type="term" value="F:2-hydroxy-3-keto-5-methylthiopentenyl-1-phosphate phosphatase activity"/>
    <property type="evidence" value="ECO:0007669"/>
    <property type="project" value="UniProtKB-UniRule"/>
</dbReference>
<dbReference type="GO" id="GO:0043874">
    <property type="term" value="F:acireductone synthase activity"/>
    <property type="evidence" value="ECO:0007669"/>
    <property type="project" value="UniProtKB-EC"/>
</dbReference>
<dbReference type="GO" id="GO:0000287">
    <property type="term" value="F:magnesium ion binding"/>
    <property type="evidence" value="ECO:0007669"/>
    <property type="project" value="UniProtKB-UniRule"/>
</dbReference>
<dbReference type="GO" id="GO:0019509">
    <property type="term" value="P:L-methionine salvage from methylthioadenosine"/>
    <property type="evidence" value="ECO:0007669"/>
    <property type="project" value="UniProtKB-UniRule"/>
</dbReference>
<dbReference type="CDD" id="cd01629">
    <property type="entry name" value="HAD_EP"/>
    <property type="match status" value="1"/>
</dbReference>
<dbReference type="Gene3D" id="1.10.720.60">
    <property type="match status" value="1"/>
</dbReference>
<dbReference type="Gene3D" id="3.40.50.1000">
    <property type="entry name" value="HAD superfamily/HAD-like"/>
    <property type="match status" value="1"/>
</dbReference>
<dbReference type="HAMAP" id="MF_01681">
    <property type="entry name" value="Salvage_MtnC"/>
    <property type="match status" value="1"/>
</dbReference>
<dbReference type="InterPro" id="IPR023943">
    <property type="entry name" value="Enolase-ppase_E1"/>
</dbReference>
<dbReference type="InterPro" id="IPR036412">
    <property type="entry name" value="HAD-like_sf"/>
</dbReference>
<dbReference type="InterPro" id="IPR006439">
    <property type="entry name" value="HAD-SF_hydro_IA"/>
</dbReference>
<dbReference type="InterPro" id="IPR023214">
    <property type="entry name" value="HAD_sf"/>
</dbReference>
<dbReference type="NCBIfam" id="TIGR01691">
    <property type="entry name" value="enolase-ppase"/>
    <property type="match status" value="1"/>
</dbReference>
<dbReference type="NCBIfam" id="TIGR01549">
    <property type="entry name" value="HAD-SF-IA-v1"/>
    <property type="match status" value="1"/>
</dbReference>
<dbReference type="PANTHER" id="PTHR20371">
    <property type="entry name" value="ENOLASE-PHOSPHATASE E1"/>
    <property type="match status" value="1"/>
</dbReference>
<dbReference type="PANTHER" id="PTHR20371:SF1">
    <property type="entry name" value="ENOLASE-PHOSPHATASE E1"/>
    <property type="match status" value="1"/>
</dbReference>
<dbReference type="Pfam" id="PF00702">
    <property type="entry name" value="Hydrolase"/>
    <property type="match status" value="1"/>
</dbReference>
<dbReference type="PRINTS" id="PR00413">
    <property type="entry name" value="HADHALOGNASE"/>
</dbReference>
<dbReference type="SFLD" id="SFLDG01133">
    <property type="entry name" value="C1.5.4:_Enolase-phosphatase_Li"/>
    <property type="match status" value="1"/>
</dbReference>
<dbReference type="SFLD" id="SFLDS00003">
    <property type="entry name" value="Haloacid_Dehalogenase"/>
    <property type="match status" value="1"/>
</dbReference>
<dbReference type="SUPFAM" id="SSF56784">
    <property type="entry name" value="HAD-like"/>
    <property type="match status" value="1"/>
</dbReference>
<sequence length="232" mass="24338">MTTRPELVLLDIEGTIAPISFVHDVLFPYARARLAGFVAAHGDEPEIAAALAELDAIAPGAPPVETLLALMDRDAKVGPLKLIQGRIWAEGFAEGALTSRLYPDVAPVLRAWHGSGLRLAIYSSGSEEAQRLLLGHTPDGGLTALFERFFDTRMGGKRDAASYAAIARSMAVAPAHVLFLSDVADELAAAATAGIQVCQIVRPEDGTIASADYPTAPDLAAVAAAFDRPDPA</sequence>
<reference key="1">
    <citation type="submission" date="2007-05" db="EMBL/GenBank/DDBJ databases">
        <title>Complete sequence of chromosome of Acidiphilium cryptum JF-5.</title>
        <authorList>
            <consortium name="US DOE Joint Genome Institute"/>
            <person name="Copeland A."/>
            <person name="Lucas S."/>
            <person name="Lapidus A."/>
            <person name="Barry K."/>
            <person name="Detter J.C."/>
            <person name="Glavina del Rio T."/>
            <person name="Hammon N."/>
            <person name="Israni S."/>
            <person name="Dalin E."/>
            <person name="Tice H."/>
            <person name="Pitluck S."/>
            <person name="Sims D."/>
            <person name="Brettin T."/>
            <person name="Bruce D."/>
            <person name="Han C."/>
            <person name="Schmutz J."/>
            <person name="Larimer F."/>
            <person name="Land M."/>
            <person name="Hauser L."/>
            <person name="Kyrpides N."/>
            <person name="Kim E."/>
            <person name="Magnuson T."/>
            <person name="Richardson P."/>
        </authorList>
    </citation>
    <scope>NUCLEOTIDE SEQUENCE [LARGE SCALE GENOMIC DNA]</scope>
    <source>
        <strain>JF-5</strain>
    </source>
</reference>
<name>MTNC_ACICJ</name>